<evidence type="ECO:0000255" key="1"/>
<evidence type="ECO:0000256" key="2">
    <source>
        <dbReference type="SAM" id="MobiDB-lite"/>
    </source>
</evidence>
<evidence type="ECO:0000305" key="3"/>
<proteinExistence type="inferred from homology"/>
<protein>
    <recommendedName>
        <fullName>Uncharacterized protein RT0030</fullName>
    </recommendedName>
</protein>
<comment type="subcellular location">
    <subcellularLocation>
        <location evidence="3">Cell membrane</location>
        <topology evidence="3">Multi-pass membrane protein</topology>
    </subcellularLocation>
</comment>
<comment type="similarity">
    <text evidence="3">Belongs to the TrbL/VirB6 family.</text>
</comment>
<feature type="signal peptide" evidence="1">
    <location>
        <begin position="1"/>
        <end position="24"/>
    </location>
</feature>
<feature type="chain" id="PRO_0000269216" description="Uncharacterized protein RT0030">
    <location>
        <begin position="25"/>
        <end position="971"/>
    </location>
</feature>
<feature type="transmembrane region" description="Helical" evidence="1">
    <location>
        <begin position="611"/>
        <end position="631"/>
    </location>
</feature>
<feature type="transmembrane region" description="Helical" evidence="1">
    <location>
        <begin position="721"/>
        <end position="741"/>
    </location>
</feature>
<feature type="transmembrane region" description="Helical" evidence="1">
    <location>
        <begin position="753"/>
        <end position="773"/>
    </location>
</feature>
<feature type="transmembrane region" description="Helical" evidence="1">
    <location>
        <begin position="795"/>
        <end position="815"/>
    </location>
</feature>
<feature type="transmembrane region" description="Helical" evidence="1">
    <location>
        <begin position="832"/>
        <end position="852"/>
    </location>
</feature>
<feature type="transmembrane region" description="Helical" evidence="1">
    <location>
        <begin position="865"/>
        <end position="885"/>
    </location>
</feature>
<feature type="region of interest" description="Disordered" evidence="2">
    <location>
        <begin position="127"/>
        <end position="146"/>
    </location>
</feature>
<feature type="region of interest" description="Disordered" evidence="2">
    <location>
        <begin position="933"/>
        <end position="971"/>
    </location>
</feature>
<feature type="compositionally biased region" description="Basic residues" evidence="2">
    <location>
        <begin position="933"/>
        <end position="944"/>
    </location>
</feature>
<feature type="compositionally biased region" description="Basic and acidic residues" evidence="2">
    <location>
        <begin position="945"/>
        <end position="954"/>
    </location>
</feature>
<keyword id="KW-1003">Cell membrane</keyword>
<keyword id="KW-0472">Membrane</keyword>
<keyword id="KW-0732">Signal</keyword>
<keyword id="KW-0812">Transmembrane</keyword>
<keyword id="KW-1133">Transmembrane helix</keyword>
<organism>
    <name type="scientific">Rickettsia typhi (strain ATCC VR-144 / Wilmington)</name>
    <dbReference type="NCBI Taxonomy" id="257363"/>
    <lineage>
        <taxon>Bacteria</taxon>
        <taxon>Pseudomonadati</taxon>
        <taxon>Pseudomonadota</taxon>
        <taxon>Alphaproteobacteria</taxon>
        <taxon>Rickettsiales</taxon>
        <taxon>Rickettsiaceae</taxon>
        <taxon>Rickettsieae</taxon>
        <taxon>Rickettsia</taxon>
        <taxon>typhus group</taxon>
    </lineage>
</organism>
<name>Y030_RICTY</name>
<gene>
    <name type="ordered locus">RT0030</name>
</gene>
<accession>Q68XX4</accession>
<dbReference type="EMBL" id="AE017197">
    <property type="protein sequence ID" value="AAU03518.1"/>
    <property type="molecule type" value="Genomic_DNA"/>
</dbReference>
<dbReference type="RefSeq" id="WP_011190505.1">
    <property type="nucleotide sequence ID" value="NC_006142.1"/>
</dbReference>
<dbReference type="KEGG" id="rty:RT0030"/>
<dbReference type="eggNOG" id="COG3704">
    <property type="taxonomic scope" value="Bacteria"/>
</dbReference>
<dbReference type="HOGENOM" id="CLU_304399_0_0_5"/>
<dbReference type="OrthoDB" id="7160583at2"/>
<dbReference type="Proteomes" id="UP000000604">
    <property type="component" value="Chromosome"/>
</dbReference>
<dbReference type="GO" id="GO:0005886">
    <property type="term" value="C:plasma membrane"/>
    <property type="evidence" value="ECO:0007669"/>
    <property type="project" value="UniProtKB-SubCell"/>
</dbReference>
<dbReference type="GO" id="GO:0030255">
    <property type="term" value="P:protein secretion by the type IV secretion system"/>
    <property type="evidence" value="ECO:0007669"/>
    <property type="project" value="InterPro"/>
</dbReference>
<dbReference type="InterPro" id="IPR007688">
    <property type="entry name" value="Conjugal_tfr_TrbL/VirB6"/>
</dbReference>
<dbReference type="Pfam" id="PF04610">
    <property type="entry name" value="TrbL"/>
    <property type="match status" value="1"/>
</dbReference>
<sequence>MQSNLLKVLGVLAIVATLVCFIFAALGMIGAVRIGNGCYMRYSKDGNGGADSITNTITLNANANYFNISKMLPDGTTKLIPDPNRYGEWLNTQVLVEKNQQVNLQVVGQVSLCLAYLPKNNLQFTERTRPGKSNLDDSNQMIPIPRVQDANSPPVSLIMDAKNNEWRNIAELYANDKVLVSVSPNFANTDATVDDVFKGVKVTKDCTQGKTSYYPICGKYSIYSGKYVTACELKQNYWKGNVHREECYCVFGCIYQEENEQWICDAANSASHCCTSLVCDSLPAWINHYSNMPEAYKDDGSFTFSWSDKSGNLLIDYQDLQCSNNVQIPPNGECPDIVDNRNPKDKDYIGGVHCTSGICKDGDFQKNRKFWYTADGKGGKGPTGLIYQMNNTGSVSQALPSNLEFAKFVPETEQPPEYKDKNGKYLYKVIYNIPFNSNIEKSYLQYRLWSPTSQDSSKNTGGYVLNIKQTKCYRENGNSFKDIFDDRGRVQYIIVQSSENPNTSGKTYAPQGINVDSDGKSHFNANEAGYIWMKILNDPSNNLKDYKDSEGSYKVHFSTSLKVGSFTIKVMNPLLQLFKTKVQGAATSIFKNMVCYKSTDNTSCTNFFTYIKAILILYVMTYGAMFLLGFAKINQKELVIRIAKIGMVSGLINGNTFEFFNNYLFDAITNFSDSIIANMSGYSLFTSTNTISNPFMFLDAIMSKIFFSQTFIAQLLSLLSLGLSGIIYFIITFIAVCIVIITTLRAIAVYIMAFMATCILIGIAPLFISFLLFDFTRYLFDNWVRFTIRYMIEPVVMMAGIIVLTQLFTIYLDFVLGYSVCWKCTLPIKIPFIGTILPIALLNVPIFCINWFAPWGMDYMSGMMGVNMQNIVALVIIAYGMYGYVEFSGRMVAKLTSAAGPSATQIGDRMSHDAGQKTLSQIGMDYRTRKGITSRAKSRLKQRNRTLEHAEQNSKKYMKKIGENTNEGTLK</sequence>
<reference key="1">
    <citation type="journal article" date="2004" name="J. Bacteriol.">
        <title>Complete genome sequence of Rickettsia typhi and comparison with sequences of other Rickettsiae.</title>
        <authorList>
            <person name="McLeod M.P."/>
            <person name="Qin X."/>
            <person name="Karpathy S.E."/>
            <person name="Gioia J."/>
            <person name="Highlander S.K."/>
            <person name="Fox G.E."/>
            <person name="McNeill T.Z."/>
            <person name="Jiang H."/>
            <person name="Muzny D."/>
            <person name="Jacob L.S."/>
            <person name="Hawes A.C."/>
            <person name="Sodergren E."/>
            <person name="Gill R."/>
            <person name="Hume J."/>
            <person name="Morgan M."/>
            <person name="Fan G."/>
            <person name="Amin A.G."/>
            <person name="Gibbs R.A."/>
            <person name="Hong C."/>
            <person name="Yu X.-J."/>
            <person name="Walker D.H."/>
            <person name="Weinstock G.M."/>
        </authorList>
    </citation>
    <scope>NUCLEOTIDE SEQUENCE [LARGE SCALE GENOMIC DNA]</scope>
    <source>
        <strain>ATCC VR-144 / Wilmington</strain>
    </source>
</reference>